<accession>P0ABT6</accession>
<accession>P25717</accession>
<protein>
    <recommendedName>
        <fullName evidence="1">tRNA-dihydrouridine synthase B</fullName>
        <ecNumber evidence="1">1.3.1.-</ecNumber>
    </recommendedName>
</protein>
<feature type="chain" id="PRO_0000162086" description="tRNA-dihydrouridine synthase B">
    <location>
        <begin position="1"/>
        <end position="321"/>
    </location>
</feature>
<feature type="active site" description="Proton donor" evidence="1">
    <location>
        <position position="100"/>
    </location>
</feature>
<feature type="binding site" evidence="1">
    <location>
        <begin position="16"/>
        <end position="18"/>
    </location>
    <ligand>
        <name>FMN</name>
        <dbReference type="ChEBI" id="CHEBI:58210"/>
    </ligand>
</feature>
<feature type="binding site" evidence="1">
    <location>
        <position position="70"/>
    </location>
    <ligand>
        <name>FMN</name>
        <dbReference type="ChEBI" id="CHEBI:58210"/>
    </ligand>
</feature>
<feature type="binding site" evidence="1">
    <location>
        <position position="139"/>
    </location>
    <ligand>
        <name>FMN</name>
        <dbReference type="ChEBI" id="CHEBI:58210"/>
    </ligand>
</feature>
<feature type="binding site" evidence="1">
    <location>
        <begin position="200"/>
        <end position="202"/>
    </location>
    <ligand>
        <name>FMN</name>
        <dbReference type="ChEBI" id="CHEBI:58210"/>
    </ligand>
</feature>
<feature type="binding site" evidence="1">
    <location>
        <begin position="224"/>
        <end position="225"/>
    </location>
    <ligand>
        <name>FMN</name>
        <dbReference type="ChEBI" id="CHEBI:58210"/>
    </ligand>
</feature>
<proteinExistence type="inferred from homology"/>
<comment type="function">
    <text evidence="1">Catalyzes the synthesis of 5,6-dihydrouridine (D), a modified base found in the D-loop of most tRNAs, via the reduction of the C5-C6 double bond in target uridines.</text>
</comment>
<comment type="catalytic activity">
    <reaction evidence="1">
        <text>a 5,6-dihydrouridine in tRNA + NAD(+) = a uridine in tRNA + NADH + H(+)</text>
        <dbReference type="Rhea" id="RHEA:54452"/>
        <dbReference type="Rhea" id="RHEA-COMP:13339"/>
        <dbReference type="Rhea" id="RHEA-COMP:13887"/>
        <dbReference type="ChEBI" id="CHEBI:15378"/>
        <dbReference type="ChEBI" id="CHEBI:57540"/>
        <dbReference type="ChEBI" id="CHEBI:57945"/>
        <dbReference type="ChEBI" id="CHEBI:65315"/>
        <dbReference type="ChEBI" id="CHEBI:74443"/>
    </reaction>
</comment>
<comment type="catalytic activity">
    <reaction evidence="1">
        <text>a 5,6-dihydrouridine in tRNA + NADP(+) = a uridine in tRNA + NADPH + H(+)</text>
        <dbReference type="Rhea" id="RHEA:23624"/>
        <dbReference type="Rhea" id="RHEA-COMP:13339"/>
        <dbReference type="Rhea" id="RHEA-COMP:13887"/>
        <dbReference type="ChEBI" id="CHEBI:15378"/>
        <dbReference type="ChEBI" id="CHEBI:57783"/>
        <dbReference type="ChEBI" id="CHEBI:58349"/>
        <dbReference type="ChEBI" id="CHEBI:65315"/>
        <dbReference type="ChEBI" id="CHEBI:74443"/>
    </reaction>
</comment>
<comment type="cofactor">
    <cofactor evidence="1">
        <name>FMN</name>
        <dbReference type="ChEBI" id="CHEBI:58210"/>
    </cofactor>
</comment>
<comment type="similarity">
    <text evidence="1">Belongs to the Dus family. DusB subfamily.</text>
</comment>
<reference key="1">
    <citation type="journal article" date="2002" name="Proc. Natl. Acad. Sci. U.S.A.">
        <title>Extensive mosaic structure revealed by the complete genome sequence of uropathogenic Escherichia coli.</title>
        <authorList>
            <person name="Welch R.A."/>
            <person name="Burland V."/>
            <person name="Plunkett G. III"/>
            <person name="Redford P."/>
            <person name="Roesch P."/>
            <person name="Rasko D."/>
            <person name="Buckles E.L."/>
            <person name="Liou S.-R."/>
            <person name="Boutin A."/>
            <person name="Hackett J."/>
            <person name="Stroud D."/>
            <person name="Mayhew G.F."/>
            <person name="Rose D.J."/>
            <person name="Zhou S."/>
            <person name="Schwartz D.C."/>
            <person name="Perna N.T."/>
            <person name="Mobley H.L.T."/>
            <person name="Donnenberg M.S."/>
            <person name="Blattner F.R."/>
        </authorList>
    </citation>
    <scope>NUCLEOTIDE SEQUENCE [LARGE SCALE GENOMIC DNA]</scope>
    <source>
        <strain>CFT073 / ATCC 700928 / UPEC</strain>
    </source>
</reference>
<organism>
    <name type="scientific">Escherichia coli O6:H1 (strain CFT073 / ATCC 700928 / UPEC)</name>
    <dbReference type="NCBI Taxonomy" id="199310"/>
    <lineage>
        <taxon>Bacteria</taxon>
        <taxon>Pseudomonadati</taxon>
        <taxon>Pseudomonadota</taxon>
        <taxon>Gammaproteobacteria</taxon>
        <taxon>Enterobacterales</taxon>
        <taxon>Enterobacteriaceae</taxon>
        <taxon>Escherichia</taxon>
    </lineage>
</organism>
<evidence type="ECO:0000255" key="1">
    <source>
        <dbReference type="HAMAP-Rule" id="MF_02042"/>
    </source>
</evidence>
<gene>
    <name evidence="1" type="primary">dusB</name>
    <name type="ordered locus">c4026</name>
</gene>
<keyword id="KW-0285">Flavoprotein</keyword>
<keyword id="KW-0288">FMN</keyword>
<keyword id="KW-0521">NADP</keyword>
<keyword id="KW-0560">Oxidoreductase</keyword>
<keyword id="KW-1185">Reference proteome</keyword>
<keyword id="KW-0694">RNA-binding</keyword>
<keyword id="KW-0819">tRNA processing</keyword>
<keyword id="KW-0820">tRNA-binding</keyword>
<dbReference type="EC" id="1.3.1.-" evidence="1"/>
<dbReference type="EMBL" id="AE014075">
    <property type="protein sequence ID" value="AAN82466.1"/>
    <property type="molecule type" value="Genomic_DNA"/>
</dbReference>
<dbReference type="RefSeq" id="WP_001219652.1">
    <property type="nucleotide sequence ID" value="NZ_CP051263.1"/>
</dbReference>
<dbReference type="SMR" id="P0ABT6"/>
<dbReference type="STRING" id="199310.c4026"/>
<dbReference type="GeneID" id="93778727"/>
<dbReference type="KEGG" id="ecc:c4026"/>
<dbReference type="eggNOG" id="COG0042">
    <property type="taxonomic scope" value="Bacteria"/>
</dbReference>
<dbReference type="HOGENOM" id="CLU_013299_0_1_6"/>
<dbReference type="BioCyc" id="ECOL199310:C4026-MONOMER"/>
<dbReference type="Proteomes" id="UP000001410">
    <property type="component" value="Chromosome"/>
</dbReference>
<dbReference type="GO" id="GO:0050660">
    <property type="term" value="F:flavin adenine dinucleotide binding"/>
    <property type="evidence" value="ECO:0007669"/>
    <property type="project" value="InterPro"/>
</dbReference>
<dbReference type="GO" id="GO:0010181">
    <property type="term" value="F:FMN binding"/>
    <property type="evidence" value="ECO:0007669"/>
    <property type="project" value="UniProtKB-UniRule"/>
</dbReference>
<dbReference type="GO" id="GO:0000049">
    <property type="term" value="F:tRNA binding"/>
    <property type="evidence" value="ECO:0007669"/>
    <property type="project" value="UniProtKB-UniRule"/>
</dbReference>
<dbReference type="GO" id="GO:0017150">
    <property type="term" value="F:tRNA dihydrouridine synthase activity"/>
    <property type="evidence" value="ECO:0007669"/>
    <property type="project" value="UniProtKB-UniRule"/>
</dbReference>
<dbReference type="CDD" id="cd02801">
    <property type="entry name" value="DUS_like_FMN"/>
    <property type="match status" value="1"/>
</dbReference>
<dbReference type="FunFam" id="1.10.1200.80:FF:000001">
    <property type="entry name" value="tRNA-dihydrouridine synthase B"/>
    <property type="match status" value="1"/>
</dbReference>
<dbReference type="FunFam" id="3.20.20.70:FF:000051">
    <property type="entry name" value="tRNA-dihydrouridine synthase B"/>
    <property type="match status" value="1"/>
</dbReference>
<dbReference type="Gene3D" id="3.20.20.70">
    <property type="entry name" value="Aldolase class I"/>
    <property type="match status" value="1"/>
</dbReference>
<dbReference type="Gene3D" id="1.10.1200.80">
    <property type="entry name" value="Putative flavin oxidoreducatase, domain 2"/>
    <property type="match status" value="1"/>
</dbReference>
<dbReference type="HAMAP" id="MF_02042">
    <property type="entry name" value="DusB_subfam"/>
    <property type="match status" value="1"/>
</dbReference>
<dbReference type="InterPro" id="IPR013785">
    <property type="entry name" value="Aldolase_TIM"/>
</dbReference>
<dbReference type="InterPro" id="IPR035587">
    <property type="entry name" value="DUS-like_FMN-bd"/>
</dbReference>
<dbReference type="InterPro" id="IPR001269">
    <property type="entry name" value="DUS_fam"/>
</dbReference>
<dbReference type="InterPro" id="IPR032887">
    <property type="entry name" value="DusB"/>
</dbReference>
<dbReference type="InterPro" id="IPR004652">
    <property type="entry name" value="DusB-like"/>
</dbReference>
<dbReference type="InterPro" id="IPR024036">
    <property type="entry name" value="tRNA-dHydroUridine_Synthase_C"/>
</dbReference>
<dbReference type="InterPro" id="IPR018517">
    <property type="entry name" value="tRNA_hU_synthase_CS"/>
</dbReference>
<dbReference type="NCBIfam" id="TIGR00737">
    <property type="entry name" value="nifR3_yhdG"/>
    <property type="match status" value="1"/>
</dbReference>
<dbReference type="PANTHER" id="PTHR45846">
    <property type="entry name" value="TRNA-DIHYDROURIDINE(47) SYNTHASE [NAD(P)(+)]-LIKE"/>
    <property type="match status" value="1"/>
</dbReference>
<dbReference type="PANTHER" id="PTHR45846:SF1">
    <property type="entry name" value="TRNA-DIHYDROURIDINE(47) SYNTHASE [NAD(P)(+)]-LIKE"/>
    <property type="match status" value="1"/>
</dbReference>
<dbReference type="Pfam" id="PF01207">
    <property type="entry name" value="Dus"/>
    <property type="match status" value="1"/>
</dbReference>
<dbReference type="PIRSF" id="PIRSF006621">
    <property type="entry name" value="Dus"/>
    <property type="match status" value="1"/>
</dbReference>
<dbReference type="SUPFAM" id="SSF51395">
    <property type="entry name" value="FMN-linked oxidoreductases"/>
    <property type="match status" value="1"/>
</dbReference>
<dbReference type="PROSITE" id="PS01136">
    <property type="entry name" value="UPF0034"/>
    <property type="match status" value="1"/>
</dbReference>
<sequence length="321" mass="35866">MRIGQYQLRNRLIAAPMAGITDRPFRTLCYEMGAGLTVSEMMSSNPQVWESDKSRLRMVHIDEPGIRTVQIAGSDPKEMADAARINVESGAQIIDINMGCPAKKVNRKLAGSALLQYPDVVKSILTEVVNAVDVPVTLKIRTGWAPEHRNCEEIAQLAEDCGIQALTIHGRTRACLFNGEAEYDSIRAVKQKVSIPVIANGDITDPLKARAVLDYTGADALMIGRAAQGRPWIFREIQHYLDTGELLPPLPLAEVKRLLCAHVRELHDFYGPAKGYRIARKHVSWYLQEHAPNDQFRRTFNAIEDASEQLEALEAYFENFA</sequence>
<name>DUSB_ECOL6</name>